<gene>
    <name evidence="1" type="primary">rpsK</name>
    <name type="ordered locus">BCG9842_B5169</name>
</gene>
<name>RS11_BACC2</name>
<accession>B7IT45</accession>
<protein>
    <recommendedName>
        <fullName evidence="1">Small ribosomal subunit protein uS11</fullName>
    </recommendedName>
    <alternativeName>
        <fullName evidence="2">30S ribosomal protein S11</fullName>
    </alternativeName>
</protein>
<reference key="1">
    <citation type="submission" date="2008-10" db="EMBL/GenBank/DDBJ databases">
        <title>Genome sequence of Bacillus cereus G9842.</title>
        <authorList>
            <person name="Dodson R.J."/>
            <person name="Durkin A.S."/>
            <person name="Rosovitz M.J."/>
            <person name="Rasko D.A."/>
            <person name="Hoffmaster A."/>
            <person name="Ravel J."/>
            <person name="Sutton G."/>
        </authorList>
    </citation>
    <scope>NUCLEOTIDE SEQUENCE [LARGE SCALE GENOMIC DNA]</scope>
    <source>
        <strain>G9842</strain>
    </source>
</reference>
<organism>
    <name type="scientific">Bacillus cereus (strain G9842)</name>
    <dbReference type="NCBI Taxonomy" id="405531"/>
    <lineage>
        <taxon>Bacteria</taxon>
        <taxon>Bacillati</taxon>
        <taxon>Bacillota</taxon>
        <taxon>Bacilli</taxon>
        <taxon>Bacillales</taxon>
        <taxon>Bacillaceae</taxon>
        <taxon>Bacillus</taxon>
        <taxon>Bacillus cereus group</taxon>
    </lineage>
</organism>
<evidence type="ECO:0000255" key="1">
    <source>
        <dbReference type="HAMAP-Rule" id="MF_01310"/>
    </source>
</evidence>
<evidence type="ECO:0000305" key="2"/>
<sequence>MARKTNTRKKRVKKNIEAGIAHIRSTFNNTIVTLTDTHGNALSWSSAGALGFRGSRKSTPFAAQMAAEAAAKVAMEHGLKTLEVTVKGPGAGREAAIRALQAAGLEVTAIRDVTPVPHNGCRPPKRRRV</sequence>
<dbReference type="EMBL" id="CP001186">
    <property type="protein sequence ID" value="ACK93562.1"/>
    <property type="molecule type" value="Genomic_DNA"/>
</dbReference>
<dbReference type="RefSeq" id="WP_000101797.1">
    <property type="nucleotide sequence ID" value="NC_011772.1"/>
</dbReference>
<dbReference type="SMR" id="B7IT45"/>
<dbReference type="GeneID" id="92887829"/>
<dbReference type="KEGG" id="bcg:BCG9842_B5169"/>
<dbReference type="HOGENOM" id="CLU_072439_5_0_9"/>
<dbReference type="Proteomes" id="UP000006744">
    <property type="component" value="Chromosome"/>
</dbReference>
<dbReference type="GO" id="GO:1990904">
    <property type="term" value="C:ribonucleoprotein complex"/>
    <property type="evidence" value="ECO:0007669"/>
    <property type="project" value="UniProtKB-KW"/>
</dbReference>
<dbReference type="GO" id="GO:0005840">
    <property type="term" value="C:ribosome"/>
    <property type="evidence" value="ECO:0007669"/>
    <property type="project" value="UniProtKB-KW"/>
</dbReference>
<dbReference type="GO" id="GO:0019843">
    <property type="term" value="F:rRNA binding"/>
    <property type="evidence" value="ECO:0007669"/>
    <property type="project" value="UniProtKB-UniRule"/>
</dbReference>
<dbReference type="GO" id="GO:0003735">
    <property type="term" value="F:structural constituent of ribosome"/>
    <property type="evidence" value="ECO:0007669"/>
    <property type="project" value="InterPro"/>
</dbReference>
<dbReference type="GO" id="GO:0006412">
    <property type="term" value="P:translation"/>
    <property type="evidence" value="ECO:0007669"/>
    <property type="project" value="UniProtKB-UniRule"/>
</dbReference>
<dbReference type="FunFam" id="3.30.420.80:FF:000001">
    <property type="entry name" value="30S ribosomal protein S11"/>
    <property type="match status" value="1"/>
</dbReference>
<dbReference type="Gene3D" id="3.30.420.80">
    <property type="entry name" value="Ribosomal protein S11"/>
    <property type="match status" value="1"/>
</dbReference>
<dbReference type="HAMAP" id="MF_01310">
    <property type="entry name" value="Ribosomal_uS11"/>
    <property type="match status" value="1"/>
</dbReference>
<dbReference type="InterPro" id="IPR001971">
    <property type="entry name" value="Ribosomal_uS11"/>
</dbReference>
<dbReference type="InterPro" id="IPR019981">
    <property type="entry name" value="Ribosomal_uS11_bac-type"/>
</dbReference>
<dbReference type="InterPro" id="IPR018102">
    <property type="entry name" value="Ribosomal_uS11_CS"/>
</dbReference>
<dbReference type="InterPro" id="IPR036967">
    <property type="entry name" value="Ribosomal_uS11_sf"/>
</dbReference>
<dbReference type="NCBIfam" id="NF003698">
    <property type="entry name" value="PRK05309.1"/>
    <property type="match status" value="1"/>
</dbReference>
<dbReference type="NCBIfam" id="TIGR03632">
    <property type="entry name" value="uS11_bact"/>
    <property type="match status" value="1"/>
</dbReference>
<dbReference type="PANTHER" id="PTHR11759">
    <property type="entry name" value="40S RIBOSOMAL PROTEIN S14/30S RIBOSOMAL PROTEIN S11"/>
    <property type="match status" value="1"/>
</dbReference>
<dbReference type="Pfam" id="PF00411">
    <property type="entry name" value="Ribosomal_S11"/>
    <property type="match status" value="1"/>
</dbReference>
<dbReference type="PIRSF" id="PIRSF002131">
    <property type="entry name" value="Ribosomal_S11"/>
    <property type="match status" value="1"/>
</dbReference>
<dbReference type="SUPFAM" id="SSF53137">
    <property type="entry name" value="Translational machinery components"/>
    <property type="match status" value="1"/>
</dbReference>
<dbReference type="PROSITE" id="PS00054">
    <property type="entry name" value="RIBOSOMAL_S11"/>
    <property type="match status" value="1"/>
</dbReference>
<comment type="function">
    <text evidence="1">Located on the platform of the 30S subunit, it bridges several disparate RNA helices of the 16S rRNA. Forms part of the Shine-Dalgarno cleft in the 70S ribosome.</text>
</comment>
<comment type="subunit">
    <text evidence="1">Part of the 30S ribosomal subunit. Interacts with proteins S7 and S18. Binds to IF-3.</text>
</comment>
<comment type="similarity">
    <text evidence="1">Belongs to the universal ribosomal protein uS11 family.</text>
</comment>
<proteinExistence type="inferred from homology"/>
<keyword id="KW-0687">Ribonucleoprotein</keyword>
<keyword id="KW-0689">Ribosomal protein</keyword>
<keyword id="KW-0694">RNA-binding</keyword>
<keyword id="KW-0699">rRNA-binding</keyword>
<feature type="chain" id="PRO_1000141052" description="Small ribosomal subunit protein uS11">
    <location>
        <begin position="1"/>
        <end position="129"/>
    </location>
</feature>